<proteinExistence type="inferred from homology"/>
<dbReference type="EMBL" id="AM933172">
    <property type="protein sequence ID" value="CAR33108.1"/>
    <property type="molecule type" value="Genomic_DNA"/>
</dbReference>
<dbReference type="RefSeq" id="WP_000154617.1">
    <property type="nucleotide sequence ID" value="NC_011294.1"/>
</dbReference>
<dbReference type="SMR" id="B5QUA4"/>
<dbReference type="KEGG" id="set:SEN1529"/>
<dbReference type="HOGENOM" id="CLU_001265_61_2_6"/>
<dbReference type="Proteomes" id="UP000000613">
    <property type="component" value="Chromosome"/>
</dbReference>
<dbReference type="GO" id="GO:0005886">
    <property type="term" value="C:plasma membrane"/>
    <property type="evidence" value="ECO:0007669"/>
    <property type="project" value="UniProtKB-SubCell"/>
</dbReference>
<dbReference type="GO" id="GO:0015144">
    <property type="term" value="F:carbohydrate transmembrane transporter activity"/>
    <property type="evidence" value="ECO:0007669"/>
    <property type="project" value="UniProtKB-UniRule"/>
</dbReference>
<dbReference type="CDD" id="cd17324">
    <property type="entry name" value="MFS_NepI_like"/>
    <property type="match status" value="1"/>
</dbReference>
<dbReference type="Gene3D" id="1.20.1250.20">
    <property type="entry name" value="MFS general substrate transporter like domains"/>
    <property type="match status" value="1"/>
</dbReference>
<dbReference type="HAMAP" id="MF_00517">
    <property type="entry name" value="MFS_SotB"/>
    <property type="match status" value="1"/>
</dbReference>
<dbReference type="InterPro" id="IPR011701">
    <property type="entry name" value="MFS"/>
</dbReference>
<dbReference type="InterPro" id="IPR020846">
    <property type="entry name" value="MFS_dom"/>
</dbReference>
<dbReference type="InterPro" id="IPR050189">
    <property type="entry name" value="MFS_Efflux_Transporters"/>
</dbReference>
<dbReference type="InterPro" id="IPR036259">
    <property type="entry name" value="MFS_trans_sf"/>
</dbReference>
<dbReference type="InterPro" id="IPR023495">
    <property type="entry name" value="Sugar_effux_transptr_put"/>
</dbReference>
<dbReference type="NCBIfam" id="NF002921">
    <property type="entry name" value="PRK03545.1"/>
    <property type="match status" value="1"/>
</dbReference>
<dbReference type="PANTHER" id="PTHR43124">
    <property type="entry name" value="PURINE EFFLUX PUMP PBUE"/>
    <property type="match status" value="1"/>
</dbReference>
<dbReference type="PANTHER" id="PTHR43124:SF4">
    <property type="entry name" value="SUGAR EFFLUX TRANSPORTER"/>
    <property type="match status" value="1"/>
</dbReference>
<dbReference type="Pfam" id="PF07690">
    <property type="entry name" value="MFS_1"/>
    <property type="match status" value="1"/>
</dbReference>
<dbReference type="SUPFAM" id="SSF103473">
    <property type="entry name" value="MFS general substrate transporter"/>
    <property type="match status" value="1"/>
</dbReference>
<dbReference type="PROSITE" id="PS50850">
    <property type="entry name" value="MFS"/>
    <property type="match status" value="1"/>
</dbReference>
<feature type="chain" id="PRO_1000127471" description="Probable sugar efflux transporter">
    <location>
        <begin position="1"/>
        <end position="396"/>
    </location>
</feature>
<feature type="transmembrane region" description="Helical" evidence="1">
    <location>
        <begin position="15"/>
        <end position="35"/>
    </location>
</feature>
<feature type="transmembrane region" description="Helical" evidence="1">
    <location>
        <begin position="50"/>
        <end position="70"/>
    </location>
</feature>
<feature type="transmembrane region" description="Helical" evidence="1">
    <location>
        <begin position="81"/>
        <end position="101"/>
    </location>
</feature>
<feature type="transmembrane region" description="Helical" evidence="1">
    <location>
        <begin position="103"/>
        <end position="123"/>
    </location>
</feature>
<feature type="transmembrane region" description="Helical" evidence="1">
    <location>
        <begin position="136"/>
        <end position="156"/>
    </location>
</feature>
<feature type="transmembrane region" description="Helical" evidence="1">
    <location>
        <begin position="169"/>
        <end position="189"/>
    </location>
</feature>
<feature type="transmembrane region" description="Helical" evidence="1">
    <location>
        <begin position="209"/>
        <end position="229"/>
    </location>
</feature>
<feature type="transmembrane region" description="Helical" evidence="1">
    <location>
        <begin position="246"/>
        <end position="266"/>
    </location>
</feature>
<feature type="transmembrane region" description="Helical" evidence="1">
    <location>
        <begin position="275"/>
        <end position="295"/>
    </location>
</feature>
<feature type="transmembrane region" description="Helical" evidence="1">
    <location>
        <begin position="301"/>
        <end position="321"/>
    </location>
</feature>
<feature type="transmembrane region" description="Helical" evidence="1">
    <location>
        <begin position="333"/>
        <end position="353"/>
    </location>
</feature>
<feature type="transmembrane region" description="Helical" evidence="1">
    <location>
        <begin position="364"/>
        <end position="384"/>
    </location>
</feature>
<keyword id="KW-0997">Cell inner membrane</keyword>
<keyword id="KW-1003">Cell membrane</keyword>
<keyword id="KW-0472">Membrane</keyword>
<keyword id="KW-0762">Sugar transport</keyword>
<keyword id="KW-0812">Transmembrane</keyword>
<keyword id="KW-1133">Transmembrane helix</keyword>
<keyword id="KW-0813">Transport</keyword>
<sequence>MTINPVSRKVAWLRVVTLAIAAFIFNTTEFVPVGLLSDIAESFHMQTAQVGIMLTIYAWVVAVMSLPFMLLTSQMERRKLLICLFVLFIASHVLSFLAWNFTVLVISRIGIAFAHAIFWSITASLAIRLAPAGKRAQALSLIATGTALAMVLGLPIGRVVGQYFGWRTTFFAIGMGALITLLCLIKLLPKLPSEHSGSLKSLPLLFRRPALMSLYVLTVVVVTAHYTAYSYIEPFVQNVAGLSANFATVLLLILGGAGIIGSLVFGKLGNRHASSLVSIAIALLVVCLLLLLPAADSEAHLAILSIFWGIAIMVIGLGMQVKVLALAPDATDVAMALFSGIFNIGIGAGALVGNQVSLHWSMSAIGYIGAIPACAALVWAVLIFRKWPVTLEEQPH</sequence>
<gene>
    <name evidence="1" type="primary">sotB</name>
    <name type="ordered locus">SEN1529</name>
</gene>
<comment type="function">
    <text evidence="1">Involved in the efflux of sugars. The physiological role may be the reduction of the intracellular concentration of toxic sugars or sugar metabolites.</text>
</comment>
<comment type="subcellular location">
    <subcellularLocation>
        <location evidence="1">Cell inner membrane</location>
        <topology evidence="1">Multi-pass membrane protein</topology>
    </subcellularLocation>
</comment>
<comment type="similarity">
    <text evidence="1">Belongs to the major facilitator superfamily. SotB (TC 2.A.1.2) family.</text>
</comment>
<reference key="1">
    <citation type="journal article" date="2008" name="Genome Res.">
        <title>Comparative genome analysis of Salmonella enteritidis PT4 and Salmonella gallinarum 287/91 provides insights into evolutionary and host adaptation pathways.</title>
        <authorList>
            <person name="Thomson N.R."/>
            <person name="Clayton D.J."/>
            <person name="Windhorst D."/>
            <person name="Vernikos G."/>
            <person name="Davidson S."/>
            <person name="Churcher C."/>
            <person name="Quail M.A."/>
            <person name="Stevens M."/>
            <person name="Jones M.A."/>
            <person name="Watson M."/>
            <person name="Barron A."/>
            <person name="Layton A."/>
            <person name="Pickard D."/>
            <person name="Kingsley R.A."/>
            <person name="Bignell A."/>
            <person name="Clark L."/>
            <person name="Harris B."/>
            <person name="Ormond D."/>
            <person name="Abdellah Z."/>
            <person name="Brooks K."/>
            <person name="Cherevach I."/>
            <person name="Chillingworth T."/>
            <person name="Woodward J."/>
            <person name="Norberczak H."/>
            <person name="Lord A."/>
            <person name="Arrowsmith C."/>
            <person name="Jagels K."/>
            <person name="Moule S."/>
            <person name="Mungall K."/>
            <person name="Saunders M."/>
            <person name="Whitehead S."/>
            <person name="Chabalgoity J.A."/>
            <person name="Maskell D."/>
            <person name="Humphreys T."/>
            <person name="Roberts M."/>
            <person name="Barrow P.A."/>
            <person name="Dougan G."/>
            <person name="Parkhill J."/>
        </authorList>
    </citation>
    <scope>NUCLEOTIDE SEQUENCE [LARGE SCALE GENOMIC DNA]</scope>
    <source>
        <strain>P125109</strain>
    </source>
</reference>
<protein>
    <recommendedName>
        <fullName evidence="1">Probable sugar efflux transporter</fullName>
    </recommendedName>
</protein>
<organism>
    <name type="scientific">Salmonella enteritidis PT4 (strain P125109)</name>
    <dbReference type="NCBI Taxonomy" id="550537"/>
    <lineage>
        <taxon>Bacteria</taxon>
        <taxon>Pseudomonadati</taxon>
        <taxon>Pseudomonadota</taxon>
        <taxon>Gammaproteobacteria</taxon>
        <taxon>Enterobacterales</taxon>
        <taxon>Enterobacteriaceae</taxon>
        <taxon>Salmonella</taxon>
    </lineage>
</organism>
<evidence type="ECO:0000255" key="1">
    <source>
        <dbReference type="HAMAP-Rule" id="MF_00517"/>
    </source>
</evidence>
<accession>B5QUA4</accession>
<name>SOTB_SALEP</name>